<comment type="subunit">
    <text>Monomer.</text>
</comment>
<comment type="subcellular location">
    <subcellularLocation>
        <location evidence="1">Cytoplasm</location>
    </subcellularLocation>
</comment>
<reference key="1">
    <citation type="journal article" date="1999" name="Protein Sci.">
        <title>Cloning, overexpression, purification, and physicochemical characterization of a cold shock protein homolog from the hyperthermophilic bacterium Thermotoga maritima.</title>
        <authorList>
            <person name="Welker C."/>
            <person name="Bohm G."/>
            <person name="Schurig H."/>
            <person name="Jaenicke R."/>
        </authorList>
    </citation>
    <scope>NUCLEOTIDE SEQUENCE [GENOMIC DNA]</scope>
    <scope>PARTIAL PROTEIN SEQUENCE</scope>
    <source>
        <strain>ATCC 43589 / DSM 3109 / JCM 10099 / NBRC 100826 / MSB8</strain>
    </source>
</reference>
<reference key="2">
    <citation type="journal article" date="1999" name="Nature">
        <title>Evidence for lateral gene transfer between Archaea and Bacteria from genome sequence of Thermotoga maritima.</title>
        <authorList>
            <person name="Nelson K.E."/>
            <person name="Clayton R.A."/>
            <person name="Gill S.R."/>
            <person name="Gwinn M.L."/>
            <person name="Dodson R.J."/>
            <person name="Haft D.H."/>
            <person name="Hickey E.K."/>
            <person name="Peterson J.D."/>
            <person name="Nelson W.C."/>
            <person name="Ketchum K.A."/>
            <person name="McDonald L.A."/>
            <person name="Utterback T.R."/>
            <person name="Malek J.A."/>
            <person name="Linher K.D."/>
            <person name="Garrett M.M."/>
            <person name="Stewart A.M."/>
            <person name="Cotton M.D."/>
            <person name="Pratt M.S."/>
            <person name="Phillips C.A."/>
            <person name="Richardson D.L."/>
            <person name="Heidelberg J.F."/>
            <person name="Sutton G.G."/>
            <person name="Fleischmann R.D."/>
            <person name="Eisen J.A."/>
            <person name="White O."/>
            <person name="Salzberg S.L."/>
            <person name="Smith H.O."/>
            <person name="Venter J.C."/>
            <person name="Fraser C.M."/>
        </authorList>
    </citation>
    <scope>NUCLEOTIDE SEQUENCE [LARGE SCALE GENOMIC DNA]</scope>
    <source>
        <strain>ATCC 43589 / DSM 3109 / JCM 10099 / NBRC 100826 / MSB8</strain>
    </source>
</reference>
<reference key="3">
    <citation type="journal article" date="1999" name="FEBS Lett.">
        <title>Does the elimination of ion pairs affect the thermal stability of cold shock protein from the hyperthermophilic bacterium Thermotoga maritima?</title>
        <authorList>
            <person name="Frankenberg N."/>
            <person name="Welker C."/>
            <person name="Jaenicke R."/>
        </authorList>
    </citation>
    <scope>MUTAGENESIS</scope>
</reference>
<reference key="4">
    <citation type="journal article" date="2001" name="Eur. J. Biochem.">
        <title>Solution NMR structure of the cold-shock protein from the hyperthermophilic bacterium Thermotoga maritima.</title>
        <authorList>
            <person name="Kremer W."/>
            <person name="Schuler B."/>
            <person name="Harrieder S."/>
            <person name="Geyer M."/>
            <person name="Gronwald W."/>
            <person name="Welker C."/>
            <person name="Jaenicke R."/>
            <person name="Kalbitzer H.R."/>
        </authorList>
    </citation>
    <scope>STRUCTURE BY NMR</scope>
</reference>
<organism>
    <name type="scientific">Thermotoga maritima (strain ATCC 43589 / DSM 3109 / JCM 10099 / NBRC 100826 / MSB8)</name>
    <dbReference type="NCBI Taxonomy" id="243274"/>
    <lineage>
        <taxon>Bacteria</taxon>
        <taxon>Thermotogati</taxon>
        <taxon>Thermotogota</taxon>
        <taxon>Thermotogae</taxon>
        <taxon>Thermotogales</taxon>
        <taxon>Thermotogaceae</taxon>
        <taxon>Thermotoga</taxon>
    </lineage>
</organism>
<name>CSP_THEMA</name>
<dbReference type="EMBL" id="Y11219">
    <property type="protein sequence ID" value="CAA72105.1"/>
    <property type="molecule type" value="mRNA"/>
</dbReference>
<dbReference type="EMBL" id="AE000512">
    <property type="protein sequence ID" value="AAD36750.1"/>
    <property type="molecule type" value="Genomic_DNA"/>
</dbReference>
<dbReference type="PIR" id="E72222">
    <property type="entry name" value="E72222"/>
</dbReference>
<dbReference type="RefSeq" id="NP_229483.1">
    <property type="nucleotide sequence ID" value="NC_000853.1"/>
</dbReference>
<dbReference type="RefSeq" id="WP_004082199.1">
    <property type="nucleotide sequence ID" value="NC_000853.1"/>
</dbReference>
<dbReference type="PDB" id="1G6P">
    <property type="method" value="NMR"/>
    <property type="chains" value="A=1-66"/>
</dbReference>
<dbReference type="PDB" id="9JU4">
    <property type="method" value="X-ray"/>
    <property type="resolution" value="2.00 A"/>
    <property type="chains" value="B=2-66"/>
</dbReference>
<dbReference type="PDBsum" id="1G6P"/>
<dbReference type="PDBsum" id="9JU4"/>
<dbReference type="BMRB" id="O54310"/>
<dbReference type="SASBDB" id="O54310"/>
<dbReference type="SMR" id="O54310"/>
<dbReference type="FunCoup" id="O54310">
    <property type="interactions" value="182"/>
</dbReference>
<dbReference type="STRING" id="243274.TM_1683"/>
<dbReference type="PaxDb" id="243274-THEMA_05825"/>
<dbReference type="EnsemblBacteria" id="AAD36750">
    <property type="protein sequence ID" value="AAD36750"/>
    <property type="gene ID" value="TM_1683"/>
</dbReference>
<dbReference type="KEGG" id="tma:TM1683"/>
<dbReference type="KEGG" id="tmi:THEMA_05825"/>
<dbReference type="KEGG" id="tmm:Tmari_1691"/>
<dbReference type="KEGG" id="tmw:THMA_1725"/>
<dbReference type="eggNOG" id="COG1278">
    <property type="taxonomic scope" value="Bacteria"/>
</dbReference>
<dbReference type="InParanoid" id="O54310"/>
<dbReference type="OrthoDB" id="9805039at2"/>
<dbReference type="EvolutionaryTrace" id="O54310"/>
<dbReference type="Proteomes" id="UP000008183">
    <property type="component" value="Chromosome"/>
</dbReference>
<dbReference type="GO" id="GO:0005737">
    <property type="term" value="C:cytoplasm"/>
    <property type="evidence" value="ECO:0007669"/>
    <property type="project" value="UniProtKB-SubCell"/>
</dbReference>
<dbReference type="GO" id="GO:0003677">
    <property type="term" value="F:DNA binding"/>
    <property type="evidence" value="ECO:0007669"/>
    <property type="project" value="UniProtKB-KW"/>
</dbReference>
<dbReference type="GO" id="GO:0003676">
    <property type="term" value="F:nucleic acid binding"/>
    <property type="evidence" value="ECO:0000318"/>
    <property type="project" value="GO_Central"/>
</dbReference>
<dbReference type="GO" id="GO:0010468">
    <property type="term" value="P:regulation of gene expression"/>
    <property type="evidence" value="ECO:0000318"/>
    <property type="project" value="GO_Central"/>
</dbReference>
<dbReference type="CDD" id="cd04458">
    <property type="entry name" value="CSP_CDS"/>
    <property type="match status" value="1"/>
</dbReference>
<dbReference type="FunFam" id="2.40.50.140:FF:000006">
    <property type="entry name" value="Cold shock protein CspC"/>
    <property type="match status" value="1"/>
</dbReference>
<dbReference type="Gene3D" id="6.20.370.130">
    <property type="match status" value="1"/>
</dbReference>
<dbReference type="Gene3D" id="2.40.50.140">
    <property type="entry name" value="Nucleic acid-binding proteins"/>
    <property type="match status" value="1"/>
</dbReference>
<dbReference type="InterPro" id="IPR012156">
    <property type="entry name" value="Cold_shock_CspA"/>
</dbReference>
<dbReference type="InterPro" id="IPR050181">
    <property type="entry name" value="Cold_shock_domain"/>
</dbReference>
<dbReference type="InterPro" id="IPR011129">
    <property type="entry name" value="CSD"/>
</dbReference>
<dbReference type="InterPro" id="IPR019844">
    <property type="entry name" value="CSD_CS"/>
</dbReference>
<dbReference type="InterPro" id="IPR002059">
    <property type="entry name" value="CSP_DNA-bd"/>
</dbReference>
<dbReference type="InterPro" id="IPR012340">
    <property type="entry name" value="NA-bd_OB-fold"/>
</dbReference>
<dbReference type="PANTHER" id="PTHR11544">
    <property type="entry name" value="COLD SHOCK DOMAIN CONTAINING PROTEINS"/>
    <property type="match status" value="1"/>
</dbReference>
<dbReference type="Pfam" id="PF00313">
    <property type="entry name" value="CSD"/>
    <property type="match status" value="1"/>
</dbReference>
<dbReference type="PIRSF" id="PIRSF002599">
    <property type="entry name" value="Cold_shock_A"/>
    <property type="match status" value="1"/>
</dbReference>
<dbReference type="PRINTS" id="PR00050">
    <property type="entry name" value="COLDSHOCK"/>
</dbReference>
<dbReference type="SMART" id="SM00357">
    <property type="entry name" value="CSP"/>
    <property type="match status" value="1"/>
</dbReference>
<dbReference type="SUPFAM" id="SSF50249">
    <property type="entry name" value="Nucleic acid-binding proteins"/>
    <property type="match status" value="1"/>
</dbReference>
<dbReference type="PROSITE" id="PS00352">
    <property type="entry name" value="CSD_1"/>
    <property type="match status" value="1"/>
</dbReference>
<dbReference type="PROSITE" id="PS51857">
    <property type="entry name" value="CSD_2"/>
    <property type="match status" value="1"/>
</dbReference>
<protein>
    <recommendedName>
        <fullName>Cold shock-like protein</fullName>
    </recommendedName>
</protein>
<keyword id="KW-0002">3D-structure</keyword>
<keyword id="KW-0010">Activator</keyword>
<keyword id="KW-0963">Cytoplasm</keyword>
<keyword id="KW-0903">Direct protein sequencing</keyword>
<keyword id="KW-0238">DNA-binding</keyword>
<keyword id="KW-1185">Reference proteome</keyword>
<keyword id="KW-0804">Transcription</keyword>
<keyword id="KW-0805">Transcription regulation</keyword>
<accession>O54310</accession>
<sequence length="66" mass="7473">MRGKVKWFDSKKGYGFITKDEGGDVFVHWSAIEMEGFKTLKEGQVVEFEIQEGKKGPQAAHVKVVE</sequence>
<gene>
    <name type="primary">csp</name>
    <name type="ordered locus">TM_1683</name>
</gene>
<evidence type="ECO:0000250" key="1"/>
<evidence type="ECO:0000269" key="2">
    <source>
    </source>
</evidence>
<evidence type="ECO:0007829" key="3">
    <source>
        <dbReference type="PDB" id="1G6P"/>
    </source>
</evidence>
<feature type="chain" id="PRO_0000100339" description="Cold shock-like protein">
    <location>
        <begin position="1"/>
        <end position="66"/>
    </location>
</feature>
<feature type="domain" description="CSD">
    <location>
        <begin position="3"/>
        <end position="62"/>
    </location>
</feature>
<feature type="mutagenesis site" description="Destabilization at high temperature." evidence="2">
    <original>D</original>
    <variation>N</variation>
    <location>
        <position position="9"/>
    </location>
</feature>
<feature type="mutagenesis site" description="No effect on thermal stability." evidence="2">
    <original>H</original>
    <variation>N</variation>
    <location>
        <position position="61"/>
    </location>
</feature>
<feature type="strand" evidence="3">
    <location>
        <begin position="3"/>
        <end position="9"/>
    </location>
</feature>
<feature type="turn" evidence="3">
    <location>
        <begin position="10"/>
        <end position="13"/>
    </location>
</feature>
<feature type="strand" evidence="3">
    <location>
        <begin position="14"/>
        <end position="19"/>
    </location>
</feature>
<feature type="strand" evidence="3">
    <location>
        <begin position="29"/>
        <end position="32"/>
    </location>
</feature>
<feature type="strand" evidence="3">
    <location>
        <begin position="42"/>
        <end position="51"/>
    </location>
</feature>
<feature type="strand" evidence="3">
    <location>
        <begin position="53"/>
        <end position="55"/>
    </location>
</feature>
<feature type="strand" evidence="3">
    <location>
        <begin position="58"/>
        <end position="65"/>
    </location>
</feature>
<proteinExistence type="evidence at protein level"/>